<feature type="transit peptide" description="Chloroplast" evidence="2">
    <location>
        <begin position="1"/>
        <end position="44"/>
    </location>
</feature>
<feature type="chain" id="PRO_0000429173" description="Histone-lysine N-methyltransferase ATXR5">
    <location>
        <begin position="45"/>
        <end position="379"/>
    </location>
</feature>
<feature type="domain" description="SET" evidence="4">
    <location>
        <begin position="245"/>
        <end position="367"/>
    </location>
</feature>
<feature type="zinc finger region" description="PHD-type" evidence="3">
    <location>
        <begin position="64"/>
        <end position="114"/>
    </location>
</feature>
<feature type="region of interest" description="Disordered" evidence="5">
    <location>
        <begin position="1"/>
        <end position="42"/>
    </location>
</feature>
<feature type="short sequence motif" description="PIP motif">
    <location>
        <begin position="122"/>
        <end position="129"/>
    </location>
</feature>
<feature type="compositionally biased region" description="Low complexity" evidence="5">
    <location>
        <begin position="1"/>
        <end position="15"/>
    </location>
</feature>
<feature type="binding site" evidence="1">
    <location>
        <position position="221"/>
    </location>
    <ligand>
        <name>substrate</name>
    </ligand>
</feature>
<feature type="binding site" evidence="1">
    <location>
        <begin position="255"/>
        <end position="257"/>
    </location>
    <ligand>
        <name>S-adenosyl-L-methionine</name>
        <dbReference type="ChEBI" id="CHEBI:59789"/>
    </ligand>
</feature>
<feature type="binding site" evidence="1">
    <location>
        <begin position="317"/>
        <end position="321"/>
    </location>
    <ligand>
        <name>S-adenosyl-L-methionine</name>
        <dbReference type="ChEBI" id="CHEBI:59789"/>
    </ligand>
</feature>
<feature type="binding site" evidence="1">
    <location>
        <position position="339"/>
    </location>
    <ligand>
        <name>substrate</name>
    </ligand>
</feature>
<feature type="binding site" evidence="4">
    <location>
        <position position="366"/>
    </location>
    <ligand>
        <name>S-adenosyl-L-methionine</name>
        <dbReference type="ChEBI" id="CHEBI:59789"/>
    </ligand>
</feature>
<feature type="binding site" evidence="1">
    <location>
        <begin position="369"/>
        <end position="370"/>
    </location>
    <ligand>
        <name>substrate</name>
    </ligand>
</feature>
<feature type="binding site" evidence="4">
    <location>
        <position position="373"/>
    </location>
    <ligand>
        <name>S-adenosyl-L-methionine</name>
        <dbReference type="ChEBI" id="CHEBI:59789"/>
    </ligand>
</feature>
<feature type="splice variant" id="VSP_054858" description="In isoform 2." evidence="12">
    <location>
        <begin position="120"/>
        <end position="146"/>
    </location>
</feature>
<feature type="sequence conflict" description="In Ref. 1; AAZ31374." evidence="13" ref="1">
    <original>R</original>
    <variation>P</variation>
    <location>
        <position position="347"/>
    </location>
</feature>
<dbReference type="EC" id="2.1.1.369" evidence="7 11"/>
<dbReference type="EMBL" id="DQ074689">
    <property type="protein sequence ID" value="AAZ31374.1"/>
    <property type="molecule type" value="mRNA"/>
</dbReference>
<dbReference type="EMBL" id="AB020752">
    <property type="protein sequence ID" value="BAB09537.1"/>
    <property type="status" value="ALT_SEQ"/>
    <property type="molecule type" value="Genomic_DNA"/>
</dbReference>
<dbReference type="EMBL" id="AL353994">
    <property type="protein sequence ID" value="CAB89351.1"/>
    <property type="molecule type" value="Genomic_DNA"/>
</dbReference>
<dbReference type="EMBL" id="CP002688">
    <property type="protein sequence ID" value="AED91447.1"/>
    <property type="molecule type" value="Genomic_DNA"/>
</dbReference>
<dbReference type="EMBL" id="AY064131">
    <property type="protein sequence ID" value="AAL36039.1"/>
    <property type="molecule type" value="mRNA"/>
</dbReference>
<dbReference type="EMBL" id="AY120701">
    <property type="protein sequence ID" value="AAM52244.1"/>
    <property type="molecule type" value="mRNA"/>
</dbReference>
<dbReference type="PIR" id="T49919">
    <property type="entry name" value="T49919"/>
</dbReference>
<dbReference type="RefSeq" id="NP_001078559.1">
    <molecule id="Q8VZJ1-2"/>
    <property type="nucleotide sequence ID" value="NM_001085090.2"/>
</dbReference>
<dbReference type="RefSeq" id="NP_001318519.1">
    <property type="nucleotide sequence ID" value="NM_001343068.1"/>
</dbReference>
<dbReference type="SMR" id="Q8VZJ1"/>
<dbReference type="BioGRID" id="16117">
    <property type="interactions" value="11"/>
</dbReference>
<dbReference type="DIP" id="DIP-48529N"/>
<dbReference type="FunCoup" id="Q8VZJ1">
    <property type="interactions" value="60"/>
</dbReference>
<dbReference type="IntAct" id="Q8VZJ1">
    <property type="interactions" value="11"/>
</dbReference>
<dbReference type="STRING" id="3702.Q8VZJ1"/>
<dbReference type="PaxDb" id="3702-AT5G09790.2"/>
<dbReference type="ProteomicsDB" id="241105">
    <molecule id="Q8VZJ1-2"/>
</dbReference>
<dbReference type="EnsemblPlants" id="AT5G09790.2">
    <molecule id="Q8VZJ1-2"/>
    <property type="protein sequence ID" value="AT5G09790.2"/>
    <property type="gene ID" value="AT5G09790"/>
</dbReference>
<dbReference type="GeneID" id="830839"/>
<dbReference type="Gramene" id="AT5G09790.2">
    <molecule id="Q8VZJ1-2"/>
    <property type="protein sequence ID" value="AT5G09790.2"/>
    <property type="gene ID" value="AT5G09790"/>
</dbReference>
<dbReference type="KEGG" id="ath:AT5G09790"/>
<dbReference type="Araport" id="AT5G09790"/>
<dbReference type="TAIR" id="AT5G09790">
    <property type="gene designation" value="ATXR5"/>
</dbReference>
<dbReference type="eggNOG" id="KOG1083">
    <property type="taxonomic scope" value="Eukaryota"/>
</dbReference>
<dbReference type="HOGENOM" id="CLU_051756_0_0_1"/>
<dbReference type="InParanoid" id="Q8VZJ1"/>
<dbReference type="OrthoDB" id="336088at2759"/>
<dbReference type="BRENDA" id="2.1.1.369">
    <property type="organism ID" value="399"/>
</dbReference>
<dbReference type="PRO" id="PR:Q8VZJ1"/>
<dbReference type="Proteomes" id="UP000006548">
    <property type="component" value="Chromosome 5"/>
</dbReference>
<dbReference type="ExpressionAtlas" id="Q8VZJ1">
    <property type="expression patterns" value="baseline and differential"/>
</dbReference>
<dbReference type="GO" id="GO:0009507">
    <property type="term" value="C:chloroplast"/>
    <property type="evidence" value="ECO:0000314"/>
    <property type="project" value="TAIR"/>
</dbReference>
<dbReference type="GO" id="GO:0005634">
    <property type="term" value="C:nucleus"/>
    <property type="evidence" value="ECO:0000314"/>
    <property type="project" value="TAIR"/>
</dbReference>
<dbReference type="GO" id="GO:0046976">
    <property type="term" value="F:histone H3K27 methyltransferase activity"/>
    <property type="evidence" value="ECO:0000314"/>
    <property type="project" value="TAIR"/>
</dbReference>
<dbReference type="GO" id="GO:0140953">
    <property type="term" value="F:histone H3K27 monomethyltransferase activity"/>
    <property type="evidence" value="ECO:0007669"/>
    <property type="project" value="UniProtKB-EC"/>
</dbReference>
<dbReference type="GO" id="GO:0008270">
    <property type="term" value="F:zinc ion binding"/>
    <property type="evidence" value="ECO:0007669"/>
    <property type="project" value="UniProtKB-KW"/>
</dbReference>
<dbReference type="GO" id="GO:0009294">
    <property type="term" value="P:DNA-mediated transformation"/>
    <property type="evidence" value="ECO:0000315"/>
    <property type="project" value="TAIR"/>
</dbReference>
<dbReference type="GO" id="GO:0032259">
    <property type="term" value="P:methylation"/>
    <property type="evidence" value="ECO:0007669"/>
    <property type="project" value="UniProtKB-KW"/>
</dbReference>
<dbReference type="GO" id="GO:0009555">
    <property type="term" value="P:pollen development"/>
    <property type="evidence" value="ECO:0000315"/>
    <property type="project" value="TAIR"/>
</dbReference>
<dbReference type="GO" id="GO:0051726">
    <property type="term" value="P:regulation of cell cycle"/>
    <property type="evidence" value="ECO:0000270"/>
    <property type="project" value="TAIR"/>
</dbReference>
<dbReference type="GO" id="GO:0006275">
    <property type="term" value="P:regulation of DNA replication"/>
    <property type="evidence" value="ECO:0000316"/>
    <property type="project" value="TAIR"/>
</dbReference>
<dbReference type="CDD" id="cd10539">
    <property type="entry name" value="SET_ATXR5_6-like"/>
    <property type="match status" value="1"/>
</dbReference>
<dbReference type="FunFam" id="2.170.270.10:FF:000038">
    <property type="entry name" value="Histone-lysine N-methyltransferase ATXR5"/>
    <property type="match status" value="1"/>
</dbReference>
<dbReference type="FunFam" id="3.30.40.10:FF:000802">
    <property type="entry name" value="Histone-lysine N-methyltransferase ATXR5"/>
    <property type="match status" value="1"/>
</dbReference>
<dbReference type="Gene3D" id="2.170.270.10">
    <property type="entry name" value="SET domain"/>
    <property type="match status" value="1"/>
</dbReference>
<dbReference type="Gene3D" id="3.30.40.10">
    <property type="entry name" value="Zinc/RING finger domain, C3HC4 (zinc finger)"/>
    <property type="match status" value="1"/>
</dbReference>
<dbReference type="InterPro" id="IPR053114">
    <property type="entry name" value="ATXR5/ATXR6"/>
</dbReference>
<dbReference type="InterPro" id="IPR001214">
    <property type="entry name" value="SET_dom"/>
</dbReference>
<dbReference type="InterPro" id="IPR046341">
    <property type="entry name" value="SET_dom_sf"/>
</dbReference>
<dbReference type="InterPro" id="IPR019786">
    <property type="entry name" value="Zinc_finger_PHD-type_CS"/>
</dbReference>
<dbReference type="InterPro" id="IPR011011">
    <property type="entry name" value="Znf_FYVE_PHD"/>
</dbReference>
<dbReference type="InterPro" id="IPR001965">
    <property type="entry name" value="Znf_PHD"/>
</dbReference>
<dbReference type="InterPro" id="IPR019787">
    <property type="entry name" value="Znf_PHD-finger"/>
</dbReference>
<dbReference type="InterPro" id="IPR013083">
    <property type="entry name" value="Znf_RING/FYVE/PHD"/>
</dbReference>
<dbReference type="PANTHER" id="PTHR48442">
    <property type="entry name" value="SET DOMAIN-CONTAINING PROTEIN"/>
    <property type="match status" value="1"/>
</dbReference>
<dbReference type="PANTHER" id="PTHR48442:SF1">
    <property type="entry name" value="SET DOMAIN-CONTAINING PROTEIN"/>
    <property type="match status" value="1"/>
</dbReference>
<dbReference type="Pfam" id="PF00628">
    <property type="entry name" value="PHD"/>
    <property type="match status" value="1"/>
</dbReference>
<dbReference type="Pfam" id="PF00856">
    <property type="entry name" value="SET"/>
    <property type="match status" value="1"/>
</dbReference>
<dbReference type="SMART" id="SM00249">
    <property type="entry name" value="PHD"/>
    <property type="match status" value="1"/>
</dbReference>
<dbReference type="SMART" id="SM00317">
    <property type="entry name" value="SET"/>
    <property type="match status" value="1"/>
</dbReference>
<dbReference type="SUPFAM" id="SSF57903">
    <property type="entry name" value="FYVE/PHD zinc finger"/>
    <property type="match status" value="1"/>
</dbReference>
<dbReference type="SUPFAM" id="SSF82199">
    <property type="entry name" value="SET domain"/>
    <property type="match status" value="1"/>
</dbReference>
<dbReference type="PROSITE" id="PS50280">
    <property type="entry name" value="SET"/>
    <property type="match status" value="1"/>
</dbReference>
<dbReference type="PROSITE" id="PS01359">
    <property type="entry name" value="ZF_PHD_1"/>
    <property type="match status" value="1"/>
</dbReference>
<dbReference type="PROSITE" id="PS50016">
    <property type="entry name" value="ZF_PHD_2"/>
    <property type="match status" value="1"/>
</dbReference>
<keyword id="KW-0025">Alternative splicing</keyword>
<keyword id="KW-0150">Chloroplast</keyword>
<keyword id="KW-0156">Chromatin regulator</keyword>
<keyword id="KW-0479">Metal-binding</keyword>
<keyword id="KW-0489">Methyltransferase</keyword>
<keyword id="KW-0539">Nucleus</keyword>
<keyword id="KW-0934">Plastid</keyword>
<keyword id="KW-1185">Reference proteome</keyword>
<keyword id="KW-0949">S-adenosyl-L-methionine</keyword>
<keyword id="KW-0808">Transferase</keyword>
<keyword id="KW-0809">Transit peptide</keyword>
<keyword id="KW-0862">Zinc</keyword>
<keyword id="KW-0863">Zinc-finger</keyword>
<sequence length="379" mass="43034">MATWNASSPAASPCSSRRRTKAPARRPSSESPPPRKMKSMAEIMAKSVPVVEQEEEEDEDSYSNVTCEKCGSGEGDDELLLCDKCDRGFHMKCLRPIVVRVPIGTWLCVDCSDQRPVRRLSQKKILHFFRIEKHTHQTDKLELSQEETRKRRRSCSLTVKKRRRKLLPLVPSEDPDQRLAQMGTLASALTALGIKYSDGLNYVPGMAPRSANQSKLEKGGMQVLCKEDLETLEQCQSMYRRGECPPLVVVFDPLEGYTVEADGPIKDLTFIAEYTGDVDYLKNREKDDCDSIMTLLLSEDPSKTLVICPDKFGNISRFINGINNHNPVAKKKQNCKCVRYSINGECRVLLVATRDISKGERLYYDYNGYEHEYPTHHFL</sequence>
<comment type="function">
    <text evidence="7 9 10 11">Histone methyltransferase that specifically monomethylates 'Lys-27' of histone H3 (H3K27me1). Has much higher activity on nucleosomes containing H3.1 than H3.3. Involved in the formation of constitutive heterochromatin and the silencing of heterochromatic elements. Influences which sets of rRNA gene variants are expressed or silenced.</text>
</comment>
<comment type="catalytic activity">
    <reaction evidence="7 11">
        <text>L-lysyl(27)-[histone H3] + S-adenosyl-L-methionine = N(6)-methyl-L-lysyl(27)-[histone H3] + S-adenosyl-L-homocysteine + H(+)</text>
        <dbReference type="Rhea" id="RHEA:60296"/>
        <dbReference type="Rhea" id="RHEA-COMP:15544"/>
        <dbReference type="Rhea" id="RHEA-COMP:15548"/>
        <dbReference type="ChEBI" id="CHEBI:15378"/>
        <dbReference type="ChEBI" id="CHEBI:29969"/>
        <dbReference type="ChEBI" id="CHEBI:57856"/>
        <dbReference type="ChEBI" id="CHEBI:59789"/>
        <dbReference type="ChEBI" id="CHEBI:61929"/>
        <dbReference type="EC" id="2.1.1.369"/>
    </reaction>
</comment>
<comment type="subunit">
    <text evidence="6 8 9">Isoform 1 but not isoform 2 interacts with PCNA1 and PCNA2. Interacts (via PHD domain) with HTR1 (via N-terminus). Isoform 2 interacts with IPS1.</text>
</comment>
<comment type="interaction">
    <interactant intactId="EBI-15200822">
        <id>Q8VZJ1-1</id>
    </interactant>
    <interactant intactId="EBI-4458733">
        <id>Q9FEN9</id>
        <label>SHL</label>
    </interactant>
    <organismsDiffer>false</organismsDiffer>
    <experiments>3</experiments>
</comment>
<comment type="subcellular location">
    <subcellularLocation>
        <location evidence="6">Nucleus</location>
    </subcellularLocation>
    <subcellularLocation>
        <location evidence="6">Plastid</location>
        <location evidence="6">Chloroplast</location>
    </subcellularLocation>
    <text>Never found in plastids and the nucleus within the same cell.</text>
</comment>
<comment type="alternative products">
    <event type="alternative splicing"/>
    <isoform>
        <id>Q8VZJ1-2</id>
        <name>1</name>
        <sequence type="displayed"/>
    </isoform>
    <isoform>
        <id>Q8VZJ1-1</id>
        <name>2</name>
        <sequence type="described" ref="VSP_054858"/>
    </isoform>
</comment>
<comment type="tissue specificity">
    <text evidence="6">Expressed in leaves, roots, stems, flowers, siliques and developing pollen. Up-regulated in tissues where cell division is active.</text>
</comment>
<comment type="disruption phenotype">
    <text evidence="7">No visible phenotype. Atxr5 and atxr6 double mutant is smaller than wild-type plants, shows partial decondensation of the chromocenter, decreased H3K27 monomethylation and increased DNA re-replication.</text>
</comment>
<comment type="miscellaneous">
    <text evidence="14">The binding to histone H3.2 is unaffected by mono-, di, or trimethylation at H3K9, but is strongly reduced by increasing levels of H3K4 methylation.</text>
</comment>
<comment type="miscellaneous">
    <molecule>Isoform 1</molecule>
    <text>Major isoform.</text>
</comment>
<comment type="similarity">
    <text evidence="4">Belongs to the class V-like SAM-binding methyltransferase superfamily. Histone-lysine methyltransferase family. TRX/MLL subfamily.</text>
</comment>
<comment type="sequence caution" evidence="13">
    <conflict type="erroneous gene model prediction">
        <sequence resource="EMBL-CDS" id="BAB09537"/>
    </conflict>
</comment>
<accession>Q8VZJ1</accession>
<accession>F4KFB9</accession>
<accession>Q1AJM5</accession>
<accession>Q9FXW6</accession>
<accession>Q9LXE2</accession>
<evidence type="ECO:0000250" key="1"/>
<evidence type="ECO:0000255" key="2"/>
<evidence type="ECO:0000255" key="3">
    <source>
        <dbReference type="PROSITE-ProRule" id="PRU00146"/>
    </source>
</evidence>
<evidence type="ECO:0000255" key="4">
    <source>
        <dbReference type="PROSITE-ProRule" id="PRU00190"/>
    </source>
</evidence>
<evidence type="ECO:0000256" key="5">
    <source>
        <dbReference type="SAM" id="MobiDB-lite"/>
    </source>
</evidence>
<evidence type="ECO:0000269" key="6">
    <source>
    </source>
</evidence>
<evidence type="ECO:0000269" key="7">
    <source>
    </source>
</evidence>
<evidence type="ECO:0000269" key="8">
    <source>
    </source>
</evidence>
<evidence type="ECO:0000269" key="9">
    <source>
    </source>
</evidence>
<evidence type="ECO:0000269" key="10">
    <source>
    </source>
</evidence>
<evidence type="ECO:0000269" key="11">
    <source>
    </source>
</evidence>
<evidence type="ECO:0000303" key="12">
    <source>
    </source>
</evidence>
<evidence type="ECO:0000305" key="13"/>
<evidence type="ECO:0000305" key="14">
    <source>
    </source>
</evidence>
<proteinExistence type="evidence at protein level"/>
<protein>
    <recommendedName>
        <fullName>Histone-lysine N-methyltransferase ATXR5</fullName>
        <ecNumber evidence="7 11">2.1.1.369</ecNumber>
    </recommendedName>
    <alternativeName>
        <fullName>Protein SET DOMAIN GROUP 15</fullName>
    </alternativeName>
    <alternativeName>
        <fullName>Trithorax-related protein 5</fullName>
        <shortName>TRX-related protein 5</shortName>
    </alternativeName>
</protein>
<name>ATXR5_ARATH</name>
<gene>
    <name type="primary">ATXR5</name>
    <name type="synonym">SDG15</name>
    <name type="synonym">SET15</name>
    <name type="ordered locus">At5g09790</name>
    <name type="ORF">17I14.20</name>
    <name type="ORF">MTH16.26</name>
</gene>
<organism>
    <name type="scientific">Arabidopsis thaliana</name>
    <name type="common">Mouse-ear cress</name>
    <dbReference type="NCBI Taxonomy" id="3702"/>
    <lineage>
        <taxon>Eukaryota</taxon>
        <taxon>Viridiplantae</taxon>
        <taxon>Streptophyta</taxon>
        <taxon>Embryophyta</taxon>
        <taxon>Tracheophyta</taxon>
        <taxon>Spermatophyta</taxon>
        <taxon>Magnoliopsida</taxon>
        <taxon>eudicotyledons</taxon>
        <taxon>Gunneridae</taxon>
        <taxon>Pentapetalae</taxon>
        <taxon>rosids</taxon>
        <taxon>malvids</taxon>
        <taxon>Brassicales</taxon>
        <taxon>Brassicaceae</taxon>
        <taxon>Camelineae</taxon>
        <taxon>Arabidopsis</taxon>
    </lineage>
</organism>
<reference key="1">
    <citation type="journal article" date="2006" name="Plant J.">
        <title>Two cell-cycle regulated SET-domain proteins interact with proliferating cell nuclear antigen (PCNA) in Arabidopsis.</title>
        <authorList>
            <person name="Raynaud C."/>
            <person name="Sozzani R."/>
            <person name="Glab N."/>
            <person name="Domenichini S."/>
            <person name="Perennes C."/>
            <person name="Cella R."/>
            <person name="Kondorosi E."/>
            <person name="Bergounioux C."/>
        </authorList>
    </citation>
    <scope>NUCLEOTIDE SEQUENCE [MRNA] (ISOFORM 1)</scope>
    <scope>ALTERNATIVE SPLICING</scope>
    <scope>INTERACTION WITH PCNA1 AND PCNA2</scope>
    <scope>TISSUE SPECIFICITY</scope>
    <scope>SUBCELLULAR LOCATION</scope>
</reference>
<reference key="2">
    <citation type="journal article" date="1999" name="DNA Res.">
        <title>Structural analysis of Arabidopsis thaliana chromosome 5. IX. Sequence features of the regions of 1,011,550 bp covered by seventeen P1 and TAC clones.</title>
        <authorList>
            <person name="Kaneko T."/>
            <person name="Katoh T."/>
            <person name="Sato S."/>
            <person name="Nakamura Y."/>
            <person name="Asamizu E."/>
            <person name="Kotani H."/>
            <person name="Miyajima N."/>
            <person name="Tabata S."/>
        </authorList>
    </citation>
    <scope>NUCLEOTIDE SEQUENCE [LARGE SCALE GENOMIC DNA]</scope>
    <source>
        <strain>cv. Columbia</strain>
    </source>
</reference>
<reference key="3">
    <citation type="journal article" date="2000" name="Nature">
        <title>Sequence and analysis of chromosome 5 of the plant Arabidopsis thaliana.</title>
        <authorList>
            <person name="Tabata S."/>
            <person name="Kaneko T."/>
            <person name="Nakamura Y."/>
            <person name="Kotani H."/>
            <person name="Kato T."/>
            <person name="Asamizu E."/>
            <person name="Miyajima N."/>
            <person name="Sasamoto S."/>
            <person name="Kimura T."/>
            <person name="Hosouchi T."/>
            <person name="Kawashima K."/>
            <person name="Kohara M."/>
            <person name="Matsumoto M."/>
            <person name="Matsuno A."/>
            <person name="Muraki A."/>
            <person name="Nakayama S."/>
            <person name="Nakazaki N."/>
            <person name="Naruo K."/>
            <person name="Okumura S."/>
            <person name="Shinpo S."/>
            <person name="Takeuchi C."/>
            <person name="Wada T."/>
            <person name="Watanabe A."/>
            <person name="Yamada M."/>
            <person name="Yasuda M."/>
            <person name="Sato S."/>
            <person name="de la Bastide M."/>
            <person name="Huang E."/>
            <person name="Spiegel L."/>
            <person name="Gnoj L."/>
            <person name="O'Shaughnessy A."/>
            <person name="Preston R."/>
            <person name="Habermann K."/>
            <person name="Murray J."/>
            <person name="Johnson D."/>
            <person name="Rohlfing T."/>
            <person name="Nelson J."/>
            <person name="Stoneking T."/>
            <person name="Pepin K."/>
            <person name="Spieth J."/>
            <person name="Sekhon M."/>
            <person name="Armstrong J."/>
            <person name="Becker M."/>
            <person name="Belter E."/>
            <person name="Cordum H."/>
            <person name="Cordes M."/>
            <person name="Courtney L."/>
            <person name="Courtney W."/>
            <person name="Dante M."/>
            <person name="Du H."/>
            <person name="Edwards J."/>
            <person name="Fryman J."/>
            <person name="Haakensen B."/>
            <person name="Lamar E."/>
            <person name="Latreille P."/>
            <person name="Leonard S."/>
            <person name="Meyer R."/>
            <person name="Mulvaney E."/>
            <person name="Ozersky P."/>
            <person name="Riley A."/>
            <person name="Strowmatt C."/>
            <person name="Wagner-McPherson C."/>
            <person name="Wollam A."/>
            <person name="Yoakum M."/>
            <person name="Bell M."/>
            <person name="Dedhia N."/>
            <person name="Parnell L."/>
            <person name="Shah R."/>
            <person name="Rodriguez M."/>
            <person name="Hoon See L."/>
            <person name="Vil D."/>
            <person name="Baker J."/>
            <person name="Kirchoff K."/>
            <person name="Toth K."/>
            <person name="King L."/>
            <person name="Bahret A."/>
            <person name="Miller B."/>
            <person name="Marra M.A."/>
            <person name="Martienssen R."/>
            <person name="McCombie W.R."/>
            <person name="Wilson R.K."/>
            <person name="Murphy G."/>
            <person name="Bancroft I."/>
            <person name="Volckaert G."/>
            <person name="Wambutt R."/>
            <person name="Duesterhoeft A."/>
            <person name="Stiekema W."/>
            <person name="Pohl T."/>
            <person name="Entian K.-D."/>
            <person name="Terryn N."/>
            <person name="Hartley N."/>
            <person name="Bent E."/>
            <person name="Johnson S."/>
            <person name="Langham S.-A."/>
            <person name="McCullagh B."/>
            <person name="Robben J."/>
            <person name="Grymonprez B."/>
            <person name="Zimmermann W."/>
            <person name="Ramsperger U."/>
            <person name="Wedler H."/>
            <person name="Balke K."/>
            <person name="Wedler E."/>
            <person name="Peters S."/>
            <person name="van Staveren M."/>
            <person name="Dirkse W."/>
            <person name="Mooijman P."/>
            <person name="Klein Lankhorst R."/>
            <person name="Weitzenegger T."/>
            <person name="Bothe G."/>
            <person name="Rose M."/>
            <person name="Hauf J."/>
            <person name="Berneiser S."/>
            <person name="Hempel S."/>
            <person name="Feldpausch M."/>
            <person name="Lamberth S."/>
            <person name="Villarroel R."/>
            <person name="Gielen J."/>
            <person name="Ardiles W."/>
            <person name="Bents O."/>
            <person name="Lemcke K."/>
            <person name="Kolesov G."/>
            <person name="Mayer K.F.X."/>
            <person name="Rudd S."/>
            <person name="Schoof H."/>
            <person name="Schueller C."/>
            <person name="Zaccaria P."/>
            <person name="Mewes H.-W."/>
            <person name="Bevan M."/>
            <person name="Fransz P.F."/>
        </authorList>
    </citation>
    <scope>NUCLEOTIDE SEQUENCE [LARGE SCALE GENOMIC DNA]</scope>
    <source>
        <strain>cv. Columbia</strain>
    </source>
</reference>
<reference key="4">
    <citation type="journal article" date="2017" name="Plant J.">
        <title>Araport11: a complete reannotation of the Arabidopsis thaliana reference genome.</title>
        <authorList>
            <person name="Cheng C.Y."/>
            <person name="Krishnakumar V."/>
            <person name="Chan A.P."/>
            <person name="Thibaud-Nissen F."/>
            <person name="Schobel S."/>
            <person name="Town C.D."/>
        </authorList>
    </citation>
    <scope>GENOME REANNOTATION</scope>
    <source>
        <strain>cv. Columbia</strain>
    </source>
</reference>
<reference key="5">
    <citation type="journal article" date="2003" name="Science">
        <title>Empirical analysis of transcriptional activity in the Arabidopsis genome.</title>
        <authorList>
            <person name="Yamada K."/>
            <person name="Lim J."/>
            <person name="Dale J.M."/>
            <person name="Chen H."/>
            <person name="Shinn P."/>
            <person name="Palm C.J."/>
            <person name="Southwick A.M."/>
            <person name="Wu H.C."/>
            <person name="Kim C.J."/>
            <person name="Nguyen M."/>
            <person name="Pham P.K."/>
            <person name="Cheuk R.F."/>
            <person name="Karlin-Newmann G."/>
            <person name="Liu S.X."/>
            <person name="Lam B."/>
            <person name="Sakano H."/>
            <person name="Wu T."/>
            <person name="Yu G."/>
            <person name="Miranda M."/>
            <person name="Quach H.L."/>
            <person name="Tripp M."/>
            <person name="Chang C.H."/>
            <person name="Lee J.M."/>
            <person name="Toriumi M.J."/>
            <person name="Chan M.M."/>
            <person name="Tang C.C."/>
            <person name="Onodera C.S."/>
            <person name="Deng J.M."/>
            <person name="Akiyama K."/>
            <person name="Ansari Y."/>
            <person name="Arakawa T."/>
            <person name="Banh J."/>
            <person name="Banno F."/>
            <person name="Bowser L."/>
            <person name="Brooks S.Y."/>
            <person name="Carninci P."/>
            <person name="Chao Q."/>
            <person name="Choy N."/>
            <person name="Enju A."/>
            <person name="Goldsmith A.D."/>
            <person name="Gurjal M."/>
            <person name="Hansen N.F."/>
            <person name="Hayashizaki Y."/>
            <person name="Johnson-Hopson C."/>
            <person name="Hsuan V.W."/>
            <person name="Iida K."/>
            <person name="Karnes M."/>
            <person name="Khan S."/>
            <person name="Koesema E."/>
            <person name="Ishida J."/>
            <person name="Jiang P.X."/>
            <person name="Jones T."/>
            <person name="Kawai J."/>
            <person name="Kamiya A."/>
            <person name="Meyers C."/>
            <person name="Nakajima M."/>
            <person name="Narusaka M."/>
            <person name="Seki M."/>
            <person name="Sakurai T."/>
            <person name="Satou M."/>
            <person name="Tamse R."/>
            <person name="Vaysberg M."/>
            <person name="Wallender E.K."/>
            <person name="Wong C."/>
            <person name="Yamamura Y."/>
            <person name="Yuan S."/>
            <person name="Shinozaki K."/>
            <person name="Davis R.W."/>
            <person name="Theologis A."/>
            <person name="Ecker J.R."/>
        </authorList>
    </citation>
    <scope>NUCLEOTIDE SEQUENCE [LARGE SCALE MRNA] (ISOFORM 2)</scope>
    <source>
        <strain>cv. Columbia</strain>
    </source>
</reference>
<reference key="6">
    <citation type="journal article" date="2001" name="Nucleic Acids Res.">
        <title>The Arabidopsis thaliana genome contains at least 29 active genes encoding SET domain proteins that can be assigned to four evolutionarily conserved classes.</title>
        <authorList>
            <person name="Baumbusch L.O."/>
            <person name="Thorstensen T."/>
            <person name="Krauss V."/>
            <person name="Fischer A."/>
            <person name="Naumann K."/>
            <person name="Assalkhou R."/>
            <person name="Schulz I."/>
            <person name="Reuter G."/>
            <person name="Aalen R.B."/>
        </authorList>
    </citation>
    <scope>NOMENCLATURE</scope>
</reference>
<reference key="7">
    <citation type="journal article" date="2009" name="Nat. Struct. Mol. Biol.">
        <title>ATXR5 and ATXR6 are H3K27 monomethyltransferases required for chromatin structure and gene silencing.</title>
        <authorList>
            <person name="Jacob Y."/>
            <person name="Feng S."/>
            <person name="LeBlanc C.A."/>
            <person name="Bernatavichute Y.V."/>
            <person name="Stroud H."/>
            <person name="Cokus S."/>
            <person name="Johnson L.M."/>
            <person name="Pellegrini M."/>
            <person name="Jacobsen S.E."/>
            <person name="Michaels S.D."/>
        </authorList>
    </citation>
    <scope>FUNCTION</scope>
    <scope>CATALYTIC ACTIVITY</scope>
    <scope>DISRUPTION PHENOTYPE</scope>
</reference>
<reference key="8">
    <citation type="journal article" date="2009" name="PLoS ONE">
        <title>Crosstalks between myo-inositol metabolism, programmed cell death and basal immunity in Arabidopsis.</title>
        <authorList>
            <person name="Meng P.H."/>
            <person name="Raynaud C."/>
            <person name="Tcherkez G."/>
            <person name="Blanchet S."/>
            <person name="Massoud K."/>
            <person name="Domenichini S."/>
            <person name="Henry Y."/>
            <person name="Soubigou-Taconnat L."/>
            <person name="Lelarge-Trouverie C."/>
            <person name="Saindrenan P."/>
            <person name="Renou J.P."/>
            <person name="Bergounioux C."/>
        </authorList>
    </citation>
    <scope>INTERACTION WITH IPS1</scope>
</reference>
<reference key="9">
    <citation type="journal article" date="2010" name="Nature">
        <title>Regulation of heterochromatic DNA replication by histone H3 lysine 27 methyltransferases.</title>
        <authorList>
            <person name="Jacob Y."/>
            <person name="Stroud H."/>
            <person name="Leblanc C."/>
            <person name="Feng S."/>
            <person name="Zhuo L."/>
            <person name="Caro E."/>
            <person name="Hassel C."/>
            <person name="Gutierrez C."/>
            <person name="Michaels S.D."/>
            <person name="Jacobsen S.E."/>
        </authorList>
    </citation>
    <scope>FUNCTION</scope>
    <scope>INTERACTION WITH HTR1</scope>
</reference>
<reference key="10">
    <citation type="journal article" date="2012" name="Genes Dev.">
        <title>Histone methyltransferases regulating rRNA gene dose and dosage control in Arabidopsis.</title>
        <authorList>
            <person name="Pontvianne F."/>
            <person name="Blevins T."/>
            <person name="Chandrasekhara C."/>
            <person name="Feng W."/>
            <person name="Stroud H."/>
            <person name="Jacobsen S.E."/>
            <person name="Michaels S.D."/>
            <person name="Pikaard C.S."/>
        </authorList>
    </citation>
    <scope>FUNCTION</scope>
</reference>
<reference key="11">
    <citation type="journal article" date="2014" name="Science">
        <title>Selective methylation of histone H3 variant H3.1 regulates heterochromatin replication.</title>
        <authorList>
            <person name="Jacob Y."/>
            <person name="Bergamin E."/>
            <person name="Donoghue M.T."/>
            <person name="Mongeon V."/>
            <person name="LeBlanc C."/>
            <person name="Voigt P."/>
            <person name="Underwood C.J."/>
            <person name="Brunzelle J.S."/>
            <person name="Michaels S.D."/>
            <person name="Reinberg D."/>
            <person name="Couture J.F."/>
            <person name="Martienssen R.A."/>
        </authorList>
    </citation>
    <scope>SUBSTRATE SPECIFICITY</scope>
</reference>
<reference key="12">
    <citation type="journal article" date="2022" name="Science">
        <title>The histone H3.1 variant regulates TONSOKU-mediated DNA repair during replication.</title>
        <authorList>
            <person name="Davarinejad H."/>
            <person name="Huang Y.C."/>
            <person name="Mermaz B."/>
            <person name="LeBlanc C."/>
            <person name="Poulet A."/>
            <person name="Thomson G."/>
            <person name="Joly V."/>
            <person name="Munoz M."/>
            <person name="Arvanitis-Vigneault A."/>
            <person name="Valsakumar D."/>
            <person name="Villarino G."/>
            <person name="Ross A."/>
            <person name="Rotstein B.H."/>
            <person name="Alarcon E.I."/>
            <person name="Brunzelle J.S."/>
            <person name="Voigt P."/>
            <person name="Dong J."/>
            <person name="Couture J.F."/>
            <person name="Jacob Y."/>
        </authorList>
    </citation>
    <scope>FUNCTION</scope>
    <scope>CATALYTIC ACTIVITY</scope>
</reference>